<organism>
    <name type="scientific">Aeropyrum pernix (strain ATCC 700893 / DSM 11879 / JCM 9820 / NBRC 100138 / K1)</name>
    <dbReference type="NCBI Taxonomy" id="272557"/>
    <lineage>
        <taxon>Archaea</taxon>
        <taxon>Thermoproteota</taxon>
        <taxon>Thermoprotei</taxon>
        <taxon>Desulfurococcales</taxon>
        <taxon>Desulfurococcaceae</taxon>
        <taxon>Aeropyrum</taxon>
    </lineage>
</organism>
<feature type="chain" id="PRO_0000114458" description="3-hydroxy-3-methylglutaryl-coenzyme A reductase">
    <location>
        <begin position="1"/>
        <end position="421"/>
    </location>
</feature>
<feature type="active site" description="Charge relay system" evidence="1">
    <location>
        <position position="109"/>
    </location>
</feature>
<feature type="active site" description="Charge relay system" evidence="1">
    <location>
        <position position="240"/>
    </location>
</feature>
<feature type="active site" description="Charge relay system" evidence="1">
    <location>
        <position position="315"/>
    </location>
</feature>
<feature type="active site" description="Proton donor" evidence="1">
    <location>
        <position position="410"/>
    </location>
</feature>
<comment type="function">
    <text evidence="1">Converts HMG-CoA to mevalonate.</text>
</comment>
<comment type="catalytic activity">
    <reaction>
        <text>(R)-mevalonate + 2 NADP(+) + CoA = (3S)-3-hydroxy-3-methylglutaryl-CoA + 2 NADPH + 2 H(+)</text>
        <dbReference type="Rhea" id="RHEA:15989"/>
        <dbReference type="ChEBI" id="CHEBI:15378"/>
        <dbReference type="ChEBI" id="CHEBI:36464"/>
        <dbReference type="ChEBI" id="CHEBI:43074"/>
        <dbReference type="ChEBI" id="CHEBI:57287"/>
        <dbReference type="ChEBI" id="CHEBI:57783"/>
        <dbReference type="ChEBI" id="CHEBI:58349"/>
        <dbReference type="EC" id="1.1.1.34"/>
    </reaction>
</comment>
<comment type="pathway">
    <text>Metabolic intermediate biosynthesis; (R)-mevalonate biosynthesis; (R)-mevalonate from acetyl-CoA: step 3/3.</text>
</comment>
<comment type="similarity">
    <text evidence="2">Belongs to the HMG-CoA reductase family.</text>
</comment>
<dbReference type="EC" id="1.1.1.34"/>
<dbReference type="EMBL" id="BA000002">
    <property type="protein sequence ID" value="BAA80874.1"/>
    <property type="molecule type" value="Genomic_DNA"/>
</dbReference>
<dbReference type="PIR" id="E72573">
    <property type="entry name" value="E72573"/>
</dbReference>
<dbReference type="RefSeq" id="WP_010866648.1">
    <property type="nucleotide sequence ID" value="NC_000854.2"/>
</dbReference>
<dbReference type="SMR" id="Q9YAS4"/>
<dbReference type="STRING" id="272557.APE_1869"/>
<dbReference type="EnsemblBacteria" id="BAA80874">
    <property type="protein sequence ID" value="BAA80874"/>
    <property type="gene ID" value="APE_1869"/>
</dbReference>
<dbReference type="GeneID" id="1446303"/>
<dbReference type="KEGG" id="ape:APE_1869"/>
<dbReference type="PATRIC" id="fig|272557.25.peg.1254"/>
<dbReference type="eggNOG" id="arCOG04260">
    <property type="taxonomic scope" value="Archaea"/>
</dbReference>
<dbReference type="UniPathway" id="UPA00058">
    <property type="reaction ID" value="UER00103"/>
</dbReference>
<dbReference type="Proteomes" id="UP000002518">
    <property type="component" value="Chromosome"/>
</dbReference>
<dbReference type="GO" id="GO:0004420">
    <property type="term" value="F:hydroxymethylglutaryl-CoA reductase (NADPH) activity"/>
    <property type="evidence" value="ECO:0007669"/>
    <property type="project" value="UniProtKB-EC"/>
</dbReference>
<dbReference type="GO" id="GO:0015936">
    <property type="term" value="P:coenzyme A metabolic process"/>
    <property type="evidence" value="ECO:0007669"/>
    <property type="project" value="InterPro"/>
</dbReference>
<dbReference type="GO" id="GO:0008299">
    <property type="term" value="P:isoprenoid biosynthetic process"/>
    <property type="evidence" value="ECO:0007669"/>
    <property type="project" value="UniProtKB-KW"/>
</dbReference>
<dbReference type="GO" id="GO:0016126">
    <property type="term" value="P:sterol biosynthetic process"/>
    <property type="evidence" value="ECO:0007669"/>
    <property type="project" value="TreeGrafter"/>
</dbReference>
<dbReference type="CDD" id="cd00643">
    <property type="entry name" value="HMG-CoA_reductase_classI"/>
    <property type="match status" value="1"/>
</dbReference>
<dbReference type="FunFam" id="3.30.70.420:FF:000001">
    <property type="entry name" value="3-hydroxy-3-methylglutaryl coenzyme A reductase"/>
    <property type="match status" value="1"/>
</dbReference>
<dbReference type="Gene3D" id="3.90.770.10">
    <property type="entry name" value="3-hydroxy-3-methylglutaryl-coenzyme A Reductase, Chain A, domain 2"/>
    <property type="match status" value="1"/>
</dbReference>
<dbReference type="Gene3D" id="1.10.3270.10">
    <property type="entry name" value="HMGR, N-terminal domain"/>
    <property type="match status" value="1"/>
</dbReference>
<dbReference type="Gene3D" id="3.30.70.420">
    <property type="entry name" value="Hydroxymethylglutaryl-CoA reductase, class I/II, NAD/NADP-binding domain"/>
    <property type="match status" value="1"/>
</dbReference>
<dbReference type="InterPro" id="IPR002202">
    <property type="entry name" value="HMG_CoA_Rdtase"/>
</dbReference>
<dbReference type="InterPro" id="IPR023074">
    <property type="entry name" value="HMG_CoA_Rdtase_cat_sf"/>
</dbReference>
<dbReference type="InterPro" id="IPR023076">
    <property type="entry name" value="HMG_CoA_Rdtase_CS"/>
</dbReference>
<dbReference type="InterPro" id="IPR004554">
    <property type="entry name" value="HMG_CoA_Rdtase_eu_arc"/>
</dbReference>
<dbReference type="InterPro" id="IPR023282">
    <property type="entry name" value="HMG_CoA_Rdtase_N"/>
</dbReference>
<dbReference type="InterPro" id="IPR009023">
    <property type="entry name" value="HMG_CoA_Rdtase_NAD(P)-bd_sf"/>
</dbReference>
<dbReference type="InterPro" id="IPR009029">
    <property type="entry name" value="HMG_CoA_Rdtase_sub-bd_dom_sf"/>
</dbReference>
<dbReference type="NCBIfam" id="TIGR00533">
    <property type="entry name" value="HMG_CoA_R_NADP"/>
    <property type="match status" value="1"/>
</dbReference>
<dbReference type="PANTHER" id="PTHR10572">
    <property type="entry name" value="3-HYDROXY-3-METHYLGLUTARYL-COENZYME A REDUCTASE"/>
    <property type="match status" value="1"/>
</dbReference>
<dbReference type="PANTHER" id="PTHR10572:SF24">
    <property type="entry name" value="3-HYDROXY-3-METHYLGLUTARYL-COENZYME A REDUCTASE"/>
    <property type="match status" value="1"/>
</dbReference>
<dbReference type="Pfam" id="PF00368">
    <property type="entry name" value="HMG-CoA_red"/>
    <property type="match status" value="1"/>
</dbReference>
<dbReference type="PRINTS" id="PR00071">
    <property type="entry name" value="HMGCOARDTASE"/>
</dbReference>
<dbReference type="SUPFAM" id="SSF55035">
    <property type="entry name" value="NAD-binding domain of HMG-CoA reductase"/>
    <property type="match status" value="1"/>
</dbReference>
<dbReference type="SUPFAM" id="SSF56542">
    <property type="entry name" value="Substrate-binding domain of HMG-CoA reductase"/>
    <property type="match status" value="1"/>
</dbReference>
<dbReference type="PROSITE" id="PS00066">
    <property type="entry name" value="HMG_COA_REDUCTASE_1"/>
    <property type="match status" value="1"/>
</dbReference>
<dbReference type="PROSITE" id="PS00318">
    <property type="entry name" value="HMG_COA_REDUCTASE_2"/>
    <property type="match status" value="1"/>
</dbReference>
<dbReference type="PROSITE" id="PS50065">
    <property type="entry name" value="HMG_COA_REDUCTASE_4"/>
    <property type="match status" value="1"/>
</dbReference>
<gene>
    <name type="primary">hmgA</name>
    <name type="ordered locus">APE_1869</name>
</gene>
<evidence type="ECO:0000250" key="1"/>
<evidence type="ECO:0000305" key="2"/>
<name>HMDH_AERPE</name>
<keyword id="KW-0414">Isoprene biosynthesis</keyword>
<keyword id="KW-0521">NADP</keyword>
<keyword id="KW-0560">Oxidoreductase</keyword>
<keyword id="KW-1185">Reference proteome</keyword>
<sequence>MGSSSGQKPRRLEDLVDKLASGSLSHSRLEKELGNANEAALVRRLYLERLTGASLSSVASTILDFQELYGRNIENPIGAVQVPVGVAGPLRINGDYARGDFYIPLATTEGALVASVNRGAKAITLSGGARAKVIKDGMTRAPLLWTPSVYEAHRLAMWVEDRIEDLRSVVAGVTRHGRLQHIYPYIIGNLVWLRLSFSTGDAMGMNMVTISSDRICRYIEENYDGDAKCIALSGNMCTDKKPAAINKILGRGKYVVAEAVIKGEVVKNVLKTTPQNINLVNVTKNLLGSAAAGSHSFNAHFANIIAAIFIATGQDAAQVVESSMGYTWTEVRGEDLYISVTLPSLEVGTVGGGTRLPTQRELLALLGVAGGGNPPGSNALKLAEIIASAVLAGELNLLSAIAAGQLARAHELLGRGGLKIS</sequence>
<reference key="1">
    <citation type="journal article" date="1999" name="DNA Res.">
        <title>Complete genome sequence of an aerobic hyper-thermophilic crenarchaeon, Aeropyrum pernix K1.</title>
        <authorList>
            <person name="Kawarabayasi Y."/>
            <person name="Hino Y."/>
            <person name="Horikawa H."/>
            <person name="Yamazaki S."/>
            <person name="Haikawa Y."/>
            <person name="Jin-no K."/>
            <person name="Takahashi M."/>
            <person name="Sekine M."/>
            <person name="Baba S."/>
            <person name="Ankai A."/>
            <person name="Kosugi H."/>
            <person name="Hosoyama A."/>
            <person name="Fukui S."/>
            <person name="Nagai Y."/>
            <person name="Nishijima K."/>
            <person name="Nakazawa H."/>
            <person name="Takamiya M."/>
            <person name="Masuda S."/>
            <person name="Funahashi T."/>
            <person name="Tanaka T."/>
            <person name="Kudoh Y."/>
            <person name="Yamazaki J."/>
            <person name="Kushida N."/>
            <person name="Oguchi A."/>
            <person name="Aoki K."/>
            <person name="Kubota K."/>
            <person name="Nakamura Y."/>
            <person name="Nomura N."/>
            <person name="Sako Y."/>
            <person name="Kikuchi H."/>
        </authorList>
    </citation>
    <scope>NUCLEOTIDE SEQUENCE [LARGE SCALE GENOMIC DNA]</scope>
    <source>
        <strain>ATCC 700893 / DSM 11879 / JCM 9820 / NBRC 100138 / K1</strain>
    </source>
</reference>
<protein>
    <recommendedName>
        <fullName>3-hydroxy-3-methylglutaryl-coenzyme A reductase</fullName>
        <shortName>HMG-CoA reductase</shortName>
        <ecNumber>1.1.1.34</ecNumber>
    </recommendedName>
</protein>
<accession>Q9YAS4</accession>
<proteinExistence type="inferred from homology"/>